<dbReference type="EMBL" id="EU606015">
    <property type="protein sequence ID" value="ACF16990.1"/>
    <property type="molecule type" value="Genomic_DNA"/>
</dbReference>
<dbReference type="RefSeq" id="YP_002122367.1">
    <property type="nucleotide sequence ID" value="NC_011132.1"/>
</dbReference>
<dbReference type="SMR" id="B4YNE6"/>
<dbReference type="KEGG" id="vg:6760339"/>
<dbReference type="OrthoDB" id="31083at10239"/>
<dbReference type="Proteomes" id="UP000001863">
    <property type="component" value="Segment"/>
</dbReference>
<dbReference type="GO" id="GO:0005615">
    <property type="term" value="C:extracellular space"/>
    <property type="evidence" value="ECO:0007669"/>
    <property type="project" value="TreeGrafter"/>
</dbReference>
<dbReference type="GO" id="GO:0030020">
    <property type="term" value="F:extracellular matrix structural constituent conferring tensile strength"/>
    <property type="evidence" value="ECO:0007669"/>
    <property type="project" value="TreeGrafter"/>
</dbReference>
<dbReference type="GO" id="GO:0030198">
    <property type="term" value="P:extracellular matrix organization"/>
    <property type="evidence" value="ECO:0007669"/>
    <property type="project" value="TreeGrafter"/>
</dbReference>
<dbReference type="InterPro" id="IPR008160">
    <property type="entry name" value="Collagen"/>
</dbReference>
<dbReference type="InterPro" id="IPR050149">
    <property type="entry name" value="Collagen_superfamily"/>
</dbReference>
<dbReference type="PANTHER" id="PTHR24023">
    <property type="entry name" value="COLLAGEN ALPHA"/>
    <property type="match status" value="1"/>
</dbReference>
<dbReference type="PANTHER" id="PTHR24023:SF914">
    <property type="entry name" value="OTOLIN-1"/>
    <property type="match status" value="1"/>
</dbReference>
<dbReference type="Pfam" id="PF01391">
    <property type="entry name" value="Collagen"/>
    <property type="match status" value="2"/>
</dbReference>
<proteinExistence type="inferred from homology"/>
<organism>
    <name type="scientific">Sputnik virophage</name>
    <dbReference type="NCBI Taxonomy" id="543939"/>
    <lineage>
        <taxon>Viruses</taxon>
        <taxon>Varidnaviria</taxon>
        <taxon>Bamfordvirae</taxon>
        <taxon>Preplasmiviricota</taxon>
        <taxon>Maveriviricetes</taxon>
        <taxon>Priklausovirales</taxon>
        <taxon>Lavidaviridae</taxon>
        <taxon>Sputnikvirus</taxon>
        <taxon>Mimivirus-dependent virus Sputnik</taxon>
    </lineage>
</organism>
<evidence type="ECO:0000255" key="1"/>
<evidence type="ECO:0000256" key="2">
    <source>
        <dbReference type="SAM" id="MobiDB-lite"/>
    </source>
</evidence>
<evidence type="ECO:0000305" key="3"/>
<protein>
    <recommendedName>
        <fullName>Collagen-like protein V6</fullName>
    </recommendedName>
</protein>
<keyword id="KW-0325">Glycoprotein</keyword>
<keyword id="KW-1185">Reference proteome</keyword>
<keyword id="KW-0677">Repeat</keyword>
<gene>
    <name type="ORF">ORF6</name>
</gene>
<sequence>MSLSTLFSPNTYNINSKSQTLNNLPSNPTSQTNTLWSNNAYNPPHLMFGSTDLSNGGGGGGQKGEKGDKGETGSNGLKGETGSNGLKGETGSGDKGDKGDSGTDGLKGQAGTDGLKGQAGTDGLKGDSGTDGLKGQTGNDGLKGQAGNDGIKGDKGEPGNDGLKGQTGTQGIKGDPGAKGDPGTSVVLSSGIWTPSVTFSTIFTGITPSTSIYSRIGNIVTFSIFTNATIPANMASGIIYFTVPVASSDFNGNNVIGTASITGNSTGVVQYGILTATASTAGIVLSMKIQASTSISVAIYATGQYFIPPG</sequence>
<name>V6_SPTNK</name>
<accession>B4YNE6</accession>
<comment type="similarity">
    <text evidence="3">Belongs to the sputnik virus V6 family.</text>
</comment>
<reference key="1">
    <citation type="journal article" date="2008" name="Nature">
        <title>The virophage as a unique parasite of the giant mimivirus.</title>
        <authorList>
            <person name="La Scola B."/>
            <person name="Desnues C."/>
            <person name="Pagnier I."/>
            <person name="Robert C."/>
            <person name="Barrassi L."/>
            <person name="Fournous G."/>
            <person name="Merchat M."/>
            <person name="Suzan-Monti M."/>
            <person name="Forterre P."/>
            <person name="Koonin E."/>
            <person name="Raoult D."/>
        </authorList>
    </citation>
    <scope>NUCLEOTIDE SEQUENCE [GENOMIC DNA]</scope>
</reference>
<feature type="chain" id="PRO_0000369814" description="Collagen-like protein V6">
    <location>
        <begin position="1"/>
        <end position="310"/>
    </location>
</feature>
<feature type="domain" description="Collagen-like 1">
    <location>
        <begin position="61"/>
        <end position="119"/>
    </location>
</feature>
<feature type="domain" description="Collagen-like 2">
    <location>
        <begin position="123"/>
        <end position="182"/>
    </location>
</feature>
<feature type="region of interest" description="Disordered" evidence="2">
    <location>
        <begin position="1"/>
        <end position="183"/>
    </location>
</feature>
<feature type="compositionally biased region" description="Polar residues" evidence="2">
    <location>
        <begin position="1"/>
        <end position="41"/>
    </location>
</feature>
<feature type="compositionally biased region" description="Basic and acidic residues" evidence="2">
    <location>
        <begin position="92"/>
        <end position="101"/>
    </location>
</feature>
<feature type="glycosylation site" description="N-linked (GlcNAc...) asparagine; by host" evidence="1">
    <location>
        <position position="227"/>
    </location>
</feature>
<feature type="glycosylation site" description="N-linked (GlcNAc...) asparagine; by host" evidence="1">
    <location>
        <position position="264"/>
    </location>
</feature>
<organismHost>
    <name type="scientific">Acanthamoeba polyphaga</name>
    <name type="common">Amoeba</name>
    <dbReference type="NCBI Taxonomy" id="5757"/>
</organismHost>